<organism>
    <name type="scientific">Chlamydia pneumoniae</name>
    <name type="common">Chlamydophila pneumoniae</name>
    <dbReference type="NCBI Taxonomy" id="83558"/>
    <lineage>
        <taxon>Bacteria</taxon>
        <taxon>Pseudomonadati</taxon>
        <taxon>Chlamydiota</taxon>
        <taxon>Chlamydiia</taxon>
        <taxon>Chlamydiales</taxon>
        <taxon>Chlamydiaceae</taxon>
        <taxon>Chlamydia/Chlamydophila group</taxon>
        <taxon>Chlamydia</taxon>
    </lineage>
</organism>
<protein>
    <recommendedName>
        <fullName evidence="1">Small ribosomal subunit protein uS13</fullName>
    </recommendedName>
    <alternativeName>
        <fullName evidence="3">30S ribosomal protein S13</fullName>
    </alternativeName>
</protein>
<name>RS13_CHLPN</name>
<gene>
    <name evidence="1" type="primary">rpsM</name>
    <name type="synonym">rs13</name>
    <name type="ordered locus">CPn_0628</name>
    <name type="ordered locus">CP_0119</name>
    <name type="ordered locus">CpB0654</name>
</gene>
<comment type="function">
    <text evidence="1">Located at the top of the head of the 30S subunit, it contacts several helices of the 16S rRNA. In the 70S ribosome it contacts the 23S rRNA (bridge B1a) and protein L5 of the 50S subunit (bridge B1b), connecting the 2 subunits; these bridges are implicated in subunit movement. Contacts the tRNAs in the A and P-sites.</text>
</comment>
<comment type="subunit">
    <text evidence="1">Part of the 30S ribosomal subunit. Forms a loose heterodimer with protein S19. Forms two bridges to the 50S subunit in the 70S ribosome.</text>
</comment>
<comment type="similarity">
    <text evidence="1">Belongs to the universal ribosomal protein uS13 family.</text>
</comment>
<feature type="chain" id="PRO_0000132079" description="Small ribosomal subunit protein uS13">
    <location>
        <begin position="1"/>
        <end position="122"/>
    </location>
</feature>
<feature type="region of interest" description="Disordered" evidence="2">
    <location>
        <begin position="93"/>
        <end position="122"/>
    </location>
</feature>
<feature type="compositionally biased region" description="Basic residues" evidence="2">
    <location>
        <begin position="101"/>
        <end position="122"/>
    </location>
</feature>
<accession>Q9Z7S6</accession>
<accession>Q9JQH4</accession>
<sequence>MPRIIGIDIPAKKKLKISLTYIYGIGSARSDEIIKKLKLDPEARASELTEEEVGRLNSLLQSEYTVEGDLRRRVQSDIKRLIAIHSYRGQRHRLSLPVRGQRTKTNSRTRKGKRKTVAGKKK</sequence>
<dbReference type="EMBL" id="AE001363">
    <property type="protein sequence ID" value="AAD18767.1"/>
    <property type="molecule type" value="Genomic_DNA"/>
</dbReference>
<dbReference type="EMBL" id="AE002161">
    <property type="protein sequence ID" value="AAF38002.1"/>
    <property type="molecule type" value="Genomic_DNA"/>
</dbReference>
<dbReference type="EMBL" id="BA000008">
    <property type="protein sequence ID" value="BAA98835.1"/>
    <property type="molecule type" value="Genomic_DNA"/>
</dbReference>
<dbReference type="EMBL" id="AE009440">
    <property type="protein sequence ID" value="AAP98583.1"/>
    <property type="molecule type" value="Genomic_DNA"/>
</dbReference>
<dbReference type="PIR" id="A86569">
    <property type="entry name" value="A86569"/>
</dbReference>
<dbReference type="PIR" id="F72053">
    <property type="entry name" value="F72053"/>
</dbReference>
<dbReference type="RefSeq" id="NP_224824.1">
    <property type="nucleotide sequence ID" value="NC_000922.1"/>
</dbReference>
<dbReference type="RefSeq" id="WP_010883266.1">
    <property type="nucleotide sequence ID" value="NZ_LN847257.1"/>
</dbReference>
<dbReference type="SMR" id="Q9Z7S6"/>
<dbReference type="STRING" id="406984.CPK_ORF00028"/>
<dbReference type="GeneID" id="45050678"/>
<dbReference type="KEGG" id="cpa:CP_0119"/>
<dbReference type="KEGG" id="cpj:rs13"/>
<dbReference type="KEGG" id="cpn:CPn_0628"/>
<dbReference type="KEGG" id="cpt:CpB0654"/>
<dbReference type="PATRIC" id="fig|115713.3.peg.698"/>
<dbReference type="eggNOG" id="COG0099">
    <property type="taxonomic scope" value="Bacteria"/>
</dbReference>
<dbReference type="HOGENOM" id="CLU_103849_1_2_0"/>
<dbReference type="OMA" id="MNVKRLM"/>
<dbReference type="OrthoDB" id="9803610at2"/>
<dbReference type="Proteomes" id="UP000000583">
    <property type="component" value="Chromosome"/>
</dbReference>
<dbReference type="Proteomes" id="UP000000801">
    <property type="component" value="Chromosome"/>
</dbReference>
<dbReference type="GO" id="GO:0005829">
    <property type="term" value="C:cytosol"/>
    <property type="evidence" value="ECO:0007669"/>
    <property type="project" value="TreeGrafter"/>
</dbReference>
<dbReference type="GO" id="GO:0015935">
    <property type="term" value="C:small ribosomal subunit"/>
    <property type="evidence" value="ECO:0007669"/>
    <property type="project" value="TreeGrafter"/>
</dbReference>
<dbReference type="GO" id="GO:0019843">
    <property type="term" value="F:rRNA binding"/>
    <property type="evidence" value="ECO:0007669"/>
    <property type="project" value="UniProtKB-UniRule"/>
</dbReference>
<dbReference type="GO" id="GO:0003735">
    <property type="term" value="F:structural constituent of ribosome"/>
    <property type="evidence" value="ECO:0007669"/>
    <property type="project" value="InterPro"/>
</dbReference>
<dbReference type="GO" id="GO:0000049">
    <property type="term" value="F:tRNA binding"/>
    <property type="evidence" value="ECO:0007669"/>
    <property type="project" value="UniProtKB-UniRule"/>
</dbReference>
<dbReference type="GO" id="GO:0006412">
    <property type="term" value="P:translation"/>
    <property type="evidence" value="ECO:0007669"/>
    <property type="project" value="UniProtKB-UniRule"/>
</dbReference>
<dbReference type="FunFam" id="1.10.8.50:FF:000001">
    <property type="entry name" value="30S ribosomal protein S13"/>
    <property type="match status" value="1"/>
</dbReference>
<dbReference type="FunFam" id="4.10.910.10:FF:000001">
    <property type="entry name" value="30S ribosomal protein S13"/>
    <property type="match status" value="1"/>
</dbReference>
<dbReference type="Gene3D" id="1.10.8.50">
    <property type="match status" value="1"/>
</dbReference>
<dbReference type="Gene3D" id="4.10.910.10">
    <property type="entry name" value="30s ribosomal protein s13, domain 2"/>
    <property type="match status" value="1"/>
</dbReference>
<dbReference type="HAMAP" id="MF_01315">
    <property type="entry name" value="Ribosomal_uS13"/>
    <property type="match status" value="1"/>
</dbReference>
<dbReference type="InterPro" id="IPR027437">
    <property type="entry name" value="Rbsml_uS13_C"/>
</dbReference>
<dbReference type="InterPro" id="IPR001892">
    <property type="entry name" value="Ribosomal_uS13"/>
</dbReference>
<dbReference type="InterPro" id="IPR010979">
    <property type="entry name" value="Ribosomal_uS13-like_H2TH"/>
</dbReference>
<dbReference type="InterPro" id="IPR019980">
    <property type="entry name" value="Ribosomal_uS13_bac-type"/>
</dbReference>
<dbReference type="InterPro" id="IPR018269">
    <property type="entry name" value="Ribosomal_uS13_CS"/>
</dbReference>
<dbReference type="NCBIfam" id="TIGR03631">
    <property type="entry name" value="uS13_bact"/>
    <property type="match status" value="1"/>
</dbReference>
<dbReference type="PANTHER" id="PTHR10871">
    <property type="entry name" value="30S RIBOSOMAL PROTEIN S13/40S RIBOSOMAL PROTEIN S18"/>
    <property type="match status" value="1"/>
</dbReference>
<dbReference type="PANTHER" id="PTHR10871:SF1">
    <property type="entry name" value="SMALL RIBOSOMAL SUBUNIT PROTEIN US13M"/>
    <property type="match status" value="1"/>
</dbReference>
<dbReference type="Pfam" id="PF00416">
    <property type="entry name" value="Ribosomal_S13"/>
    <property type="match status" value="1"/>
</dbReference>
<dbReference type="PIRSF" id="PIRSF002134">
    <property type="entry name" value="Ribosomal_S13"/>
    <property type="match status" value="1"/>
</dbReference>
<dbReference type="SUPFAM" id="SSF46946">
    <property type="entry name" value="S13-like H2TH domain"/>
    <property type="match status" value="1"/>
</dbReference>
<dbReference type="PROSITE" id="PS00646">
    <property type="entry name" value="RIBOSOMAL_S13_1"/>
    <property type="match status" value="1"/>
</dbReference>
<dbReference type="PROSITE" id="PS50159">
    <property type="entry name" value="RIBOSOMAL_S13_2"/>
    <property type="match status" value="1"/>
</dbReference>
<keyword id="KW-0687">Ribonucleoprotein</keyword>
<keyword id="KW-0689">Ribosomal protein</keyword>
<keyword id="KW-0694">RNA-binding</keyword>
<keyword id="KW-0699">rRNA-binding</keyword>
<keyword id="KW-0820">tRNA-binding</keyword>
<proteinExistence type="inferred from homology"/>
<evidence type="ECO:0000255" key="1">
    <source>
        <dbReference type="HAMAP-Rule" id="MF_01315"/>
    </source>
</evidence>
<evidence type="ECO:0000256" key="2">
    <source>
        <dbReference type="SAM" id="MobiDB-lite"/>
    </source>
</evidence>
<evidence type="ECO:0000305" key="3"/>
<reference key="1">
    <citation type="journal article" date="1999" name="Nat. Genet.">
        <title>Comparative genomes of Chlamydia pneumoniae and C. trachomatis.</title>
        <authorList>
            <person name="Kalman S."/>
            <person name="Mitchell W.P."/>
            <person name="Marathe R."/>
            <person name="Lammel C.J."/>
            <person name="Fan J."/>
            <person name="Hyman R.W."/>
            <person name="Olinger L."/>
            <person name="Grimwood J."/>
            <person name="Davis R.W."/>
            <person name="Stephens R.S."/>
        </authorList>
    </citation>
    <scope>NUCLEOTIDE SEQUENCE [LARGE SCALE GENOMIC DNA]</scope>
    <source>
        <strain>CWL029</strain>
    </source>
</reference>
<reference key="2">
    <citation type="journal article" date="2000" name="Nucleic Acids Res.">
        <title>Genome sequences of Chlamydia trachomatis MoPn and Chlamydia pneumoniae AR39.</title>
        <authorList>
            <person name="Read T.D."/>
            <person name="Brunham R.C."/>
            <person name="Shen C."/>
            <person name="Gill S.R."/>
            <person name="Heidelberg J.F."/>
            <person name="White O."/>
            <person name="Hickey E.K."/>
            <person name="Peterson J.D."/>
            <person name="Utterback T.R."/>
            <person name="Berry K.J."/>
            <person name="Bass S."/>
            <person name="Linher K.D."/>
            <person name="Weidman J.F."/>
            <person name="Khouri H.M."/>
            <person name="Craven B."/>
            <person name="Bowman C."/>
            <person name="Dodson R.J."/>
            <person name="Gwinn M.L."/>
            <person name="Nelson W.C."/>
            <person name="DeBoy R.T."/>
            <person name="Kolonay J.F."/>
            <person name="McClarty G."/>
            <person name="Salzberg S.L."/>
            <person name="Eisen J.A."/>
            <person name="Fraser C.M."/>
        </authorList>
    </citation>
    <scope>NUCLEOTIDE SEQUENCE [LARGE SCALE GENOMIC DNA]</scope>
    <source>
        <strain>AR39</strain>
    </source>
</reference>
<reference key="3">
    <citation type="journal article" date="2000" name="Nucleic Acids Res.">
        <title>Comparison of whole genome sequences of Chlamydia pneumoniae J138 from Japan and CWL029 from USA.</title>
        <authorList>
            <person name="Shirai M."/>
            <person name="Hirakawa H."/>
            <person name="Kimoto M."/>
            <person name="Tabuchi M."/>
            <person name="Kishi F."/>
            <person name="Ouchi K."/>
            <person name="Shiba T."/>
            <person name="Ishii K."/>
            <person name="Hattori M."/>
            <person name="Kuhara S."/>
            <person name="Nakazawa T."/>
        </authorList>
    </citation>
    <scope>NUCLEOTIDE SEQUENCE [LARGE SCALE GENOMIC DNA]</scope>
    <source>
        <strain>J138</strain>
    </source>
</reference>
<reference key="4">
    <citation type="submission" date="2002-05" db="EMBL/GenBank/DDBJ databases">
        <title>The genome sequence of Chlamydia pneumoniae TW183 and comparison with other Chlamydia strains based on whole genome sequence analysis.</title>
        <authorList>
            <person name="Geng M.M."/>
            <person name="Schuhmacher A."/>
            <person name="Muehldorfer I."/>
            <person name="Bensch K.W."/>
            <person name="Schaefer K.P."/>
            <person name="Schneider S."/>
            <person name="Pohl T."/>
            <person name="Essig A."/>
            <person name="Marre R."/>
            <person name="Melchers K."/>
        </authorList>
    </citation>
    <scope>NUCLEOTIDE SEQUENCE [LARGE SCALE GENOMIC DNA]</scope>
    <source>
        <strain>TW-183</strain>
    </source>
</reference>